<comment type="function">
    <text evidence="1">Catalyzes the transfer of the enolpyruvyl moiety of phosphoenolpyruvate (PEP) to the 5-hydroxyl of shikimate-3-phosphate (S3P) to produce enolpyruvyl shikimate-3-phosphate and inorganic phosphate.</text>
</comment>
<comment type="catalytic activity">
    <reaction evidence="1">
        <text>3-phosphoshikimate + phosphoenolpyruvate = 5-O-(1-carboxyvinyl)-3-phosphoshikimate + phosphate</text>
        <dbReference type="Rhea" id="RHEA:21256"/>
        <dbReference type="ChEBI" id="CHEBI:43474"/>
        <dbReference type="ChEBI" id="CHEBI:57701"/>
        <dbReference type="ChEBI" id="CHEBI:58702"/>
        <dbReference type="ChEBI" id="CHEBI:145989"/>
        <dbReference type="EC" id="2.5.1.19"/>
    </reaction>
    <physiologicalReaction direction="left-to-right" evidence="1">
        <dbReference type="Rhea" id="RHEA:21257"/>
    </physiologicalReaction>
</comment>
<comment type="pathway">
    <text evidence="1">Metabolic intermediate biosynthesis; chorismate biosynthesis; chorismate from D-erythrose 4-phosphate and phosphoenolpyruvate: step 6/7.</text>
</comment>
<comment type="subunit">
    <text evidence="1">Monomer.</text>
</comment>
<comment type="subcellular location">
    <subcellularLocation>
        <location evidence="1">Cytoplasm</location>
    </subcellularLocation>
</comment>
<comment type="similarity">
    <text evidence="1">Belongs to the EPSP synthase family.</text>
</comment>
<gene>
    <name evidence="1" type="primary">aroA</name>
    <name type="ordered locus">Nwi_0209</name>
</gene>
<evidence type="ECO:0000255" key="1">
    <source>
        <dbReference type="HAMAP-Rule" id="MF_00210"/>
    </source>
</evidence>
<keyword id="KW-0028">Amino-acid biosynthesis</keyword>
<keyword id="KW-0057">Aromatic amino acid biosynthesis</keyword>
<keyword id="KW-0963">Cytoplasm</keyword>
<keyword id="KW-1185">Reference proteome</keyword>
<keyword id="KW-0808">Transferase</keyword>
<feature type="chain" id="PRO_1000058604" description="3-phosphoshikimate 1-carboxyvinyltransferase">
    <location>
        <begin position="1"/>
        <end position="449"/>
    </location>
</feature>
<feature type="active site" description="Proton acceptor" evidence="1">
    <location>
        <position position="332"/>
    </location>
</feature>
<feature type="binding site" evidence="1">
    <location>
        <position position="28"/>
    </location>
    <ligand>
        <name>3-phosphoshikimate</name>
        <dbReference type="ChEBI" id="CHEBI:145989"/>
    </ligand>
</feature>
<feature type="binding site" evidence="1">
    <location>
        <position position="28"/>
    </location>
    <ligand>
        <name>phosphoenolpyruvate</name>
        <dbReference type="ChEBI" id="CHEBI:58702"/>
    </ligand>
</feature>
<feature type="binding site" evidence="1">
    <location>
        <position position="29"/>
    </location>
    <ligand>
        <name>3-phosphoshikimate</name>
        <dbReference type="ChEBI" id="CHEBI:145989"/>
    </ligand>
</feature>
<feature type="binding site" evidence="1">
    <location>
        <position position="33"/>
    </location>
    <ligand>
        <name>3-phosphoshikimate</name>
        <dbReference type="ChEBI" id="CHEBI:145989"/>
    </ligand>
</feature>
<feature type="binding site" evidence="1">
    <location>
        <position position="105"/>
    </location>
    <ligand>
        <name>phosphoenolpyruvate</name>
        <dbReference type="ChEBI" id="CHEBI:58702"/>
    </ligand>
</feature>
<feature type="binding site" evidence="1">
    <location>
        <position position="133"/>
    </location>
    <ligand>
        <name>phosphoenolpyruvate</name>
        <dbReference type="ChEBI" id="CHEBI:58702"/>
    </ligand>
</feature>
<feature type="binding site" evidence="1">
    <location>
        <position position="179"/>
    </location>
    <ligand>
        <name>3-phosphoshikimate</name>
        <dbReference type="ChEBI" id="CHEBI:145989"/>
    </ligand>
</feature>
<feature type="binding site" evidence="1">
    <location>
        <position position="181"/>
    </location>
    <ligand>
        <name>3-phosphoshikimate</name>
        <dbReference type="ChEBI" id="CHEBI:145989"/>
    </ligand>
</feature>
<feature type="binding site" evidence="1">
    <location>
        <position position="181"/>
    </location>
    <ligand>
        <name>phosphoenolpyruvate</name>
        <dbReference type="ChEBI" id="CHEBI:58702"/>
    </ligand>
</feature>
<feature type="binding site" evidence="1">
    <location>
        <position position="332"/>
    </location>
    <ligand>
        <name>3-phosphoshikimate</name>
        <dbReference type="ChEBI" id="CHEBI:145989"/>
    </ligand>
</feature>
<feature type="binding site" evidence="1">
    <location>
        <position position="359"/>
    </location>
    <ligand>
        <name>3-phosphoshikimate</name>
        <dbReference type="ChEBI" id="CHEBI:145989"/>
    </ligand>
</feature>
<feature type="binding site" evidence="1">
    <location>
        <position position="363"/>
    </location>
    <ligand>
        <name>phosphoenolpyruvate</name>
        <dbReference type="ChEBI" id="CHEBI:58702"/>
    </ligand>
</feature>
<feature type="binding site" evidence="1">
    <location>
        <position position="406"/>
    </location>
    <ligand>
        <name>phosphoenolpyruvate</name>
        <dbReference type="ChEBI" id="CHEBI:58702"/>
    </ligand>
</feature>
<dbReference type="EC" id="2.5.1.19" evidence="1"/>
<dbReference type="EMBL" id="CP000115">
    <property type="protein sequence ID" value="ABA03477.1"/>
    <property type="molecule type" value="Genomic_DNA"/>
</dbReference>
<dbReference type="SMR" id="Q3SW64"/>
<dbReference type="STRING" id="323098.Nwi_0209"/>
<dbReference type="KEGG" id="nwi:Nwi_0209"/>
<dbReference type="eggNOG" id="COG0128">
    <property type="taxonomic scope" value="Bacteria"/>
</dbReference>
<dbReference type="HOGENOM" id="CLU_024321_0_1_5"/>
<dbReference type="UniPathway" id="UPA00053">
    <property type="reaction ID" value="UER00089"/>
</dbReference>
<dbReference type="Proteomes" id="UP000002531">
    <property type="component" value="Chromosome"/>
</dbReference>
<dbReference type="GO" id="GO:0005737">
    <property type="term" value="C:cytoplasm"/>
    <property type="evidence" value="ECO:0007669"/>
    <property type="project" value="UniProtKB-SubCell"/>
</dbReference>
<dbReference type="GO" id="GO:0003866">
    <property type="term" value="F:3-phosphoshikimate 1-carboxyvinyltransferase activity"/>
    <property type="evidence" value="ECO:0007669"/>
    <property type="project" value="UniProtKB-UniRule"/>
</dbReference>
<dbReference type="GO" id="GO:0008652">
    <property type="term" value="P:amino acid biosynthetic process"/>
    <property type="evidence" value="ECO:0007669"/>
    <property type="project" value="UniProtKB-KW"/>
</dbReference>
<dbReference type="GO" id="GO:0009073">
    <property type="term" value="P:aromatic amino acid family biosynthetic process"/>
    <property type="evidence" value="ECO:0007669"/>
    <property type="project" value="UniProtKB-KW"/>
</dbReference>
<dbReference type="GO" id="GO:0009423">
    <property type="term" value="P:chorismate biosynthetic process"/>
    <property type="evidence" value="ECO:0007669"/>
    <property type="project" value="UniProtKB-UniRule"/>
</dbReference>
<dbReference type="CDD" id="cd01556">
    <property type="entry name" value="EPSP_synthase"/>
    <property type="match status" value="1"/>
</dbReference>
<dbReference type="FunFam" id="3.65.10.10:FF:000005">
    <property type="entry name" value="3-phosphoshikimate 1-carboxyvinyltransferase"/>
    <property type="match status" value="1"/>
</dbReference>
<dbReference type="FunFam" id="3.65.10.10:FF:000006">
    <property type="entry name" value="3-phosphoshikimate 1-carboxyvinyltransferase"/>
    <property type="match status" value="1"/>
</dbReference>
<dbReference type="Gene3D" id="3.65.10.10">
    <property type="entry name" value="Enolpyruvate transferase domain"/>
    <property type="match status" value="2"/>
</dbReference>
<dbReference type="HAMAP" id="MF_00210">
    <property type="entry name" value="EPSP_synth"/>
    <property type="match status" value="1"/>
</dbReference>
<dbReference type="InterPro" id="IPR001986">
    <property type="entry name" value="Enolpyruvate_Tfrase_dom"/>
</dbReference>
<dbReference type="InterPro" id="IPR036968">
    <property type="entry name" value="Enolpyruvate_Tfrase_sf"/>
</dbReference>
<dbReference type="InterPro" id="IPR006264">
    <property type="entry name" value="EPSP_synthase"/>
</dbReference>
<dbReference type="InterPro" id="IPR023193">
    <property type="entry name" value="EPSP_synthase_CS"/>
</dbReference>
<dbReference type="InterPro" id="IPR013792">
    <property type="entry name" value="RNA3'P_cycl/enolpyr_Trfase_a/b"/>
</dbReference>
<dbReference type="NCBIfam" id="TIGR01356">
    <property type="entry name" value="aroA"/>
    <property type="match status" value="1"/>
</dbReference>
<dbReference type="PANTHER" id="PTHR21090">
    <property type="entry name" value="AROM/DEHYDROQUINATE SYNTHASE"/>
    <property type="match status" value="1"/>
</dbReference>
<dbReference type="PANTHER" id="PTHR21090:SF5">
    <property type="entry name" value="PENTAFUNCTIONAL AROM POLYPEPTIDE"/>
    <property type="match status" value="1"/>
</dbReference>
<dbReference type="Pfam" id="PF00275">
    <property type="entry name" value="EPSP_synthase"/>
    <property type="match status" value="1"/>
</dbReference>
<dbReference type="PIRSF" id="PIRSF000505">
    <property type="entry name" value="EPSPS"/>
    <property type="match status" value="1"/>
</dbReference>
<dbReference type="SUPFAM" id="SSF55205">
    <property type="entry name" value="EPT/RTPC-like"/>
    <property type="match status" value="1"/>
</dbReference>
<dbReference type="PROSITE" id="PS00104">
    <property type="entry name" value="EPSP_SYNTHASE_1"/>
    <property type="match status" value="1"/>
</dbReference>
<reference key="1">
    <citation type="journal article" date="2006" name="Appl. Environ. Microbiol.">
        <title>Genome sequence of the chemolithoautotrophic nitrite-oxidizing bacterium Nitrobacter winogradskyi Nb-255.</title>
        <authorList>
            <person name="Starkenburg S.R."/>
            <person name="Chain P.S.G."/>
            <person name="Sayavedra-Soto L.A."/>
            <person name="Hauser L."/>
            <person name="Land M.L."/>
            <person name="Larimer F.W."/>
            <person name="Malfatti S.A."/>
            <person name="Klotz M.G."/>
            <person name="Bottomley P.J."/>
            <person name="Arp D.J."/>
            <person name="Hickey W.J."/>
        </authorList>
    </citation>
    <scope>NUCLEOTIDE SEQUENCE [LARGE SCALE GENOMIC DNA]</scope>
    <source>
        <strain>ATCC 25391 / DSM 10237 / CIP 104748 / NCIMB 11846 / Nb-255</strain>
    </source>
</reference>
<accession>Q3SW64</accession>
<protein>
    <recommendedName>
        <fullName evidence="1">3-phosphoshikimate 1-carboxyvinyltransferase</fullName>
        <ecNumber evidence="1">2.5.1.19</ecNumber>
    </recommendedName>
    <alternativeName>
        <fullName evidence="1">5-enolpyruvylshikimate-3-phosphate synthase</fullName>
        <shortName evidence="1">EPSP synthase</shortName>
        <shortName evidence="1">EPSPS</shortName>
    </alternativeName>
</protein>
<proteinExistence type="inferred from homology"/>
<name>AROA_NITWN</name>
<sequence length="449" mass="46982">MTLSGQTMPLEARKCQSLTGRVRVPGDKSISHRALILGALAVGETRISGLLEGEDVLNTAKAMQALGAKVERRTDDNGGIAWSVRGVGTGGFATPEAPLDFGNSGTGCRLVMGAVAGCPIRAAFDGDGSLRSRPMRRILDPLELMGARVISQSDGGRLPLTLEGARDPLPIVYRTPVASAQIKSAVLLAGLSAPGVTTVIEREASRDHTELMLKHFGADIVSVAEGAHGRKISLTGQPELHGAGVTVPADPSSAAFPIVAALITEGSDIVLDDVMTNPLRTGLFVTLREMGASIEESETRLDAGEPMAQLRVKASRLRGIEVPAERAPSMIDEYLVLAVAAAFAEGTTVMRGLRELRVKESDRLEAAAAMLRAGGVAVEIAGDDLIVEGRGRVPGGGLVTTHMDHRIAMSALVMGCASDAPVKVDDIAFIATSFPDFVPMMQRLGANFA</sequence>
<organism>
    <name type="scientific">Nitrobacter winogradskyi (strain ATCC 25391 / DSM 10237 / CIP 104748 / NCIMB 11846 / Nb-255)</name>
    <dbReference type="NCBI Taxonomy" id="323098"/>
    <lineage>
        <taxon>Bacteria</taxon>
        <taxon>Pseudomonadati</taxon>
        <taxon>Pseudomonadota</taxon>
        <taxon>Alphaproteobacteria</taxon>
        <taxon>Hyphomicrobiales</taxon>
        <taxon>Nitrobacteraceae</taxon>
        <taxon>Nitrobacter</taxon>
    </lineage>
</organism>